<dbReference type="EMBL" id="FN392319">
    <property type="protein sequence ID" value="CAY67183.1"/>
    <property type="molecule type" value="Genomic_DNA"/>
</dbReference>
<dbReference type="RefSeq" id="XP_002489464.1">
    <property type="nucleotide sequence ID" value="XM_002489419.1"/>
</dbReference>
<dbReference type="SMR" id="C4QVB0"/>
<dbReference type="FunCoup" id="C4QVB0">
    <property type="interactions" value="579"/>
</dbReference>
<dbReference type="STRING" id="644223.C4QVB0"/>
<dbReference type="EnsemblFungi" id="CAY67183">
    <property type="protein sequence ID" value="CAY67183"/>
    <property type="gene ID" value="PAS_chr1-3_0123"/>
</dbReference>
<dbReference type="GeneID" id="8197591"/>
<dbReference type="KEGG" id="ppa:PAS_chr1-3_0123"/>
<dbReference type="eggNOG" id="KOG3190">
    <property type="taxonomic scope" value="Eukaryota"/>
</dbReference>
<dbReference type="HOGENOM" id="CLU_048802_3_0_1"/>
<dbReference type="InParanoid" id="C4QVB0"/>
<dbReference type="OMA" id="HMKSKQR"/>
<dbReference type="OrthoDB" id="448446at2759"/>
<dbReference type="Proteomes" id="UP000000314">
    <property type="component" value="Chromosome 1"/>
</dbReference>
<dbReference type="GO" id="GO:0030686">
    <property type="term" value="C:90S preribosome"/>
    <property type="evidence" value="ECO:0007669"/>
    <property type="project" value="TreeGrafter"/>
</dbReference>
<dbReference type="GO" id="GO:0005730">
    <property type="term" value="C:nucleolus"/>
    <property type="evidence" value="ECO:0007669"/>
    <property type="project" value="UniProtKB-SubCell"/>
</dbReference>
<dbReference type="GO" id="GO:0000462">
    <property type="term" value="P:maturation of SSU-rRNA from tricistronic rRNA transcript (SSU-rRNA, 5.8S rRNA, LSU-rRNA)"/>
    <property type="evidence" value="ECO:0007669"/>
    <property type="project" value="TreeGrafter"/>
</dbReference>
<dbReference type="InterPro" id="IPR009292">
    <property type="entry name" value="RRP36"/>
</dbReference>
<dbReference type="PANTHER" id="PTHR21738">
    <property type="entry name" value="RIBOSOMAL RNA PROCESSING PROTEIN 36 HOMOLOG"/>
    <property type="match status" value="1"/>
</dbReference>
<dbReference type="PANTHER" id="PTHR21738:SF0">
    <property type="entry name" value="RIBOSOMAL RNA PROCESSING PROTEIN 36 HOMOLOG"/>
    <property type="match status" value="1"/>
</dbReference>
<dbReference type="Pfam" id="PF06102">
    <property type="entry name" value="RRP36"/>
    <property type="match status" value="1"/>
</dbReference>
<accession>C4QVB0</accession>
<sequence length="289" mass="34013">MKAQKFSKASLLDDEDDYSTQLDRILARRKKSQKEDSGDLDTISFGSLSKAQARLQTEERESKKKVKKVKKPKVLKKQEEDFQPPSDISDDGEFFEEPSQDHQSRTSDRHSKEEPRSKSKHAPSESSAKKRVSKVREIPGLLNGSGSSSLYQDVRFDTAFGKADLQKARENYKFLDEYREKEITELNKILQDDMTEQLLSEREINTIKYKIQSLKSRVDTLKNRDLENEIVRDYKRNHKNFFLKNSDKRKLVQKAKFDSMKPSQREKVIERKRKRQLGREFKQLEFNQK</sequence>
<evidence type="ECO:0000250" key="1"/>
<evidence type="ECO:0000255" key="2"/>
<evidence type="ECO:0000256" key="3">
    <source>
        <dbReference type="SAM" id="MobiDB-lite"/>
    </source>
</evidence>
<evidence type="ECO:0000305" key="4"/>
<protein>
    <recommendedName>
        <fullName>rRNA biogenesis protein RRP36</fullName>
    </recommendedName>
    <alternativeName>
        <fullName>Ribosomal RNA-processing protein 36</fullName>
    </alternativeName>
</protein>
<feature type="chain" id="PRO_0000397651" description="rRNA biogenesis protein RRP36">
    <location>
        <begin position="1"/>
        <end position="289"/>
    </location>
</feature>
<feature type="region of interest" description="Disordered" evidence="3">
    <location>
        <begin position="27"/>
        <end position="149"/>
    </location>
</feature>
<feature type="region of interest" description="Disordered" evidence="3">
    <location>
        <begin position="253"/>
        <end position="272"/>
    </location>
</feature>
<feature type="coiled-coil region" evidence="2">
    <location>
        <begin position="162"/>
        <end position="224"/>
    </location>
</feature>
<feature type="compositionally biased region" description="Basic residues" evidence="3">
    <location>
        <begin position="63"/>
        <end position="75"/>
    </location>
</feature>
<feature type="compositionally biased region" description="Acidic residues" evidence="3">
    <location>
        <begin position="88"/>
        <end position="98"/>
    </location>
</feature>
<feature type="compositionally biased region" description="Basic and acidic residues" evidence="3">
    <location>
        <begin position="99"/>
        <end position="117"/>
    </location>
</feature>
<feature type="compositionally biased region" description="Low complexity" evidence="3">
    <location>
        <begin position="140"/>
        <end position="149"/>
    </location>
</feature>
<feature type="compositionally biased region" description="Basic and acidic residues" evidence="3">
    <location>
        <begin position="253"/>
        <end position="269"/>
    </location>
</feature>
<gene>
    <name type="primary">RRP36</name>
    <name type="ordered locus">PAS_chr1-3_0123</name>
</gene>
<name>RRP36_KOMPG</name>
<reference key="1">
    <citation type="journal article" date="2009" name="Nat. Biotechnol.">
        <title>Genome sequence of the recombinant protein production host Pichia pastoris.</title>
        <authorList>
            <person name="De Schutter K."/>
            <person name="Lin Y.-C."/>
            <person name="Tiels P."/>
            <person name="Van Hecke A."/>
            <person name="Glinka S."/>
            <person name="Weber-Lehmann J."/>
            <person name="Rouze P."/>
            <person name="Van de Peer Y."/>
            <person name="Callewaert N."/>
        </authorList>
    </citation>
    <scope>NUCLEOTIDE SEQUENCE [LARGE SCALE GENOMIC DNA]</scope>
    <source>
        <strain>GS115 / ATCC 20864</strain>
    </source>
</reference>
<proteinExistence type="inferred from homology"/>
<comment type="function">
    <text evidence="1">Component of the 90S pre-ribosome involved in the maturation of rRNAs. Required for early cleavages of the pre-RNAs in the 40S ribosomal subunit maturation pathway (By similarity).</text>
</comment>
<comment type="subunit">
    <text evidence="1">Associates with 90S and pre-40S pre-ribosomal particles.</text>
</comment>
<comment type="subcellular location">
    <subcellularLocation>
        <location evidence="1">Nucleus</location>
        <location evidence="1">Nucleolus</location>
    </subcellularLocation>
</comment>
<comment type="similarity">
    <text evidence="4">Belongs to the RRP36 family.</text>
</comment>
<keyword id="KW-0175">Coiled coil</keyword>
<keyword id="KW-0539">Nucleus</keyword>
<keyword id="KW-1185">Reference proteome</keyword>
<keyword id="KW-0687">Ribonucleoprotein</keyword>
<keyword id="KW-0690">Ribosome biogenesis</keyword>
<keyword id="KW-0698">rRNA processing</keyword>
<organism>
    <name type="scientific">Komagataella phaffii (strain GS115 / ATCC 20864)</name>
    <name type="common">Yeast</name>
    <name type="synonym">Pichia pastoris</name>
    <dbReference type="NCBI Taxonomy" id="644223"/>
    <lineage>
        <taxon>Eukaryota</taxon>
        <taxon>Fungi</taxon>
        <taxon>Dikarya</taxon>
        <taxon>Ascomycota</taxon>
        <taxon>Saccharomycotina</taxon>
        <taxon>Pichiomycetes</taxon>
        <taxon>Pichiales</taxon>
        <taxon>Pichiaceae</taxon>
        <taxon>Komagataella</taxon>
    </lineage>
</organism>